<proteinExistence type="inferred from homology"/>
<protein>
    <recommendedName>
        <fullName>Uncharacterized protein YlaE</fullName>
    </recommendedName>
</protein>
<name>YLAE_BACSU</name>
<organism>
    <name type="scientific">Bacillus subtilis (strain 168)</name>
    <dbReference type="NCBI Taxonomy" id="224308"/>
    <lineage>
        <taxon>Bacteria</taxon>
        <taxon>Bacillati</taxon>
        <taxon>Bacillota</taxon>
        <taxon>Bacilli</taxon>
        <taxon>Bacillales</taxon>
        <taxon>Bacillaceae</taxon>
        <taxon>Bacillus</taxon>
    </lineage>
</organism>
<keyword id="KW-1185">Reference proteome</keyword>
<keyword id="KW-0732">Signal</keyword>
<feature type="signal peptide" evidence="1">
    <location>
        <begin position="1"/>
        <end position="31"/>
    </location>
</feature>
<feature type="chain" id="PRO_0000013713" description="Uncharacterized protein YlaE">
    <location>
        <begin position="32"/>
        <end position="203"/>
    </location>
</feature>
<reference key="1">
    <citation type="submission" date="1997-06" db="EMBL/GenBank/DDBJ databases">
        <authorList>
            <person name="Purnell B."/>
            <person name="Presecan E."/>
            <person name="Glaser P."/>
            <person name="Richou A."/>
            <person name="Danchin A."/>
            <person name="Goffeau A."/>
        </authorList>
    </citation>
    <scope>NUCLEOTIDE SEQUENCE [GENOMIC DNA]</scope>
    <source>
        <strain>168</strain>
    </source>
</reference>
<reference key="2">
    <citation type="journal article" date="1997" name="Nature">
        <title>The complete genome sequence of the Gram-positive bacterium Bacillus subtilis.</title>
        <authorList>
            <person name="Kunst F."/>
            <person name="Ogasawara N."/>
            <person name="Moszer I."/>
            <person name="Albertini A.M."/>
            <person name="Alloni G."/>
            <person name="Azevedo V."/>
            <person name="Bertero M.G."/>
            <person name="Bessieres P."/>
            <person name="Bolotin A."/>
            <person name="Borchert S."/>
            <person name="Borriss R."/>
            <person name="Boursier L."/>
            <person name="Brans A."/>
            <person name="Braun M."/>
            <person name="Brignell S.C."/>
            <person name="Bron S."/>
            <person name="Brouillet S."/>
            <person name="Bruschi C.V."/>
            <person name="Caldwell B."/>
            <person name="Capuano V."/>
            <person name="Carter N.M."/>
            <person name="Choi S.-K."/>
            <person name="Codani J.-J."/>
            <person name="Connerton I.F."/>
            <person name="Cummings N.J."/>
            <person name="Daniel R.A."/>
            <person name="Denizot F."/>
            <person name="Devine K.M."/>
            <person name="Duesterhoeft A."/>
            <person name="Ehrlich S.D."/>
            <person name="Emmerson P.T."/>
            <person name="Entian K.-D."/>
            <person name="Errington J."/>
            <person name="Fabret C."/>
            <person name="Ferrari E."/>
            <person name="Foulger D."/>
            <person name="Fritz C."/>
            <person name="Fujita M."/>
            <person name="Fujita Y."/>
            <person name="Fuma S."/>
            <person name="Galizzi A."/>
            <person name="Galleron N."/>
            <person name="Ghim S.-Y."/>
            <person name="Glaser P."/>
            <person name="Goffeau A."/>
            <person name="Golightly E.J."/>
            <person name="Grandi G."/>
            <person name="Guiseppi G."/>
            <person name="Guy B.J."/>
            <person name="Haga K."/>
            <person name="Haiech J."/>
            <person name="Harwood C.R."/>
            <person name="Henaut A."/>
            <person name="Hilbert H."/>
            <person name="Holsappel S."/>
            <person name="Hosono S."/>
            <person name="Hullo M.-F."/>
            <person name="Itaya M."/>
            <person name="Jones L.-M."/>
            <person name="Joris B."/>
            <person name="Karamata D."/>
            <person name="Kasahara Y."/>
            <person name="Klaerr-Blanchard M."/>
            <person name="Klein C."/>
            <person name="Kobayashi Y."/>
            <person name="Koetter P."/>
            <person name="Koningstein G."/>
            <person name="Krogh S."/>
            <person name="Kumano M."/>
            <person name="Kurita K."/>
            <person name="Lapidus A."/>
            <person name="Lardinois S."/>
            <person name="Lauber J."/>
            <person name="Lazarevic V."/>
            <person name="Lee S.-M."/>
            <person name="Levine A."/>
            <person name="Liu H."/>
            <person name="Masuda S."/>
            <person name="Mauel C."/>
            <person name="Medigue C."/>
            <person name="Medina N."/>
            <person name="Mellado R.P."/>
            <person name="Mizuno M."/>
            <person name="Moestl D."/>
            <person name="Nakai S."/>
            <person name="Noback M."/>
            <person name="Noone D."/>
            <person name="O'Reilly M."/>
            <person name="Ogawa K."/>
            <person name="Ogiwara A."/>
            <person name="Oudega B."/>
            <person name="Park S.-H."/>
            <person name="Parro V."/>
            <person name="Pohl T.M."/>
            <person name="Portetelle D."/>
            <person name="Porwollik S."/>
            <person name="Prescott A.M."/>
            <person name="Presecan E."/>
            <person name="Pujic P."/>
            <person name="Purnelle B."/>
            <person name="Rapoport G."/>
            <person name="Rey M."/>
            <person name="Reynolds S."/>
            <person name="Rieger M."/>
            <person name="Rivolta C."/>
            <person name="Rocha E."/>
            <person name="Roche B."/>
            <person name="Rose M."/>
            <person name="Sadaie Y."/>
            <person name="Sato T."/>
            <person name="Scanlan E."/>
            <person name="Schleich S."/>
            <person name="Schroeter R."/>
            <person name="Scoffone F."/>
            <person name="Sekiguchi J."/>
            <person name="Sekowska A."/>
            <person name="Seror S.J."/>
            <person name="Serror P."/>
            <person name="Shin B.-S."/>
            <person name="Soldo B."/>
            <person name="Sorokin A."/>
            <person name="Tacconi E."/>
            <person name="Takagi T."/>
            <person name="Takahashi H."/>
            <person name="Takemaru K."/>
            <person name="Takeuchi M."/>
            <person name="Tamakoshi A."/>
            <person name="Tanaka T."/>
            <person name="Terpstra P."/>
            <person name="Tognoni A."/>
            <person name="Tosato V."/>
            <person name="Uchiyama S."/>
            <person name="Vandenbol M."/>
            <person name="Vannier F."/>
            <person name="Vassarotti A."/>
            <person name="Viari A."/>
            <person name="Wambutt R."/>
            <person name="Wedler E."/>
            <person name="Wedler H."/>
            <person name="Weitzenegger T."/>
            <person name="Winters P."/>
            <person name="Wipat A."/>
            <person name="Yamamoto H."/>
            <person name="Yamane K."/>
            <person name="Yasumoto K."/>
            <person name="Yata K."/>
            <person name="Yoshida K."/>
            <person name="Yoshikawa H.-F."/>
            <person name="Zumstein E."/>
            <person name="Yoshikawa H."/>
            <person name="Danchin A."/>
        </authorList>
    </citation>
    <scope>NUCLEOTIDE SEQUENCE [LARGE SCALE GENOMIC DNA]</scope>
    <source>
        <strain>168</strain>
    </source>
</reference>
<evidence type="ECO:0000255" key="1"/>
<sequence length="203" mass="22454">MKKTFVKKAMLTTAAMTSAALLTFGPDAASAKTPVDNTAVQLQHQASTNEDLNTFIDILNQCIYEQDGVYYFDSEKAVELGMTKEEAQVIATLWESTSEFFSIVSQCVYLEDGNYKFDTEKAVELGFTEKEALALEQFFSAVSLKIHILQAAIVLQDDVYSYDKDAALQAGATPLQADVYEKLFSALSQEQLAAIYDMIHPQA</sequence>
<accession>O07629</accession>
<dbReference type="EMBL" id="Z97025">
    <property type="protein sequence ID" value="CAB09710.1"/>
    <property type="molecule type" value="Genomic_DNA"/>
</dbReference>
<dbReference type="EMBL" id="AL009126">
    <property type="protein sequence ID" value="CAB13348.1"/>
    <property type="molecule type" value="Genomic_DNA"/>
</dbReference>
<dbReference type="PIR" id="C69872">
    <property type="entry name" value="C69872"/>
</dbReference>
<dbReference type="RefSeq" id="NP_389358.1">
    <property type="nucleotide sequence ID" value="NC_000964.3"/>
</dbReference>
<dbReference type="RefSeq" id="WP_003232282.1">
    <property type="nucleotide sequence ID" value="NZ_OZ025638.1"/>
</dbReference>
<dbReference type="FunCoup" id="O07629">
    <property type="interactions" value="81"/>
</dbReference>
<dbReference type="STRING" id="224308.BSU14750"/>
<dbReference type="PaxDb" id="224308-BSU14750"/>
<dbReference type="DNASU" id="935955"/>
<dbReference type="EnsemblBacteria" id="CAB13348">
    <property type="protein sequence ID" value="CAB13348"/>
    <property type="gene ID" value="BSU_14750"/>
</dbReference>
<dbReference type="GeneID" id="935955"/>
<dbReference type="KEGG" id="bsu:BSU14750"/>
<dbReference type="PATRIC" id="fig|224308.179.peg.1609"/>
<dbReference type="eggNOG" id="ENOG5031G9I">
    <property type="taxonomic scope" value="Bacteria"/>
</dbReference>
<dbReference type="InParanoid" id="O07629"/>
<dbReference type="OrthoDB" id="2847978at2"/>
<dbReference type="BioCyc" id="BSUB:BSU14750-MONOMER"/>
<dbReference type="Proteomes" id="UP000001570">
    <property type="component" value="Chromosome"/>
</dbReference>
<gene>
    <name type="primary">ylaE</name>
    <name type="ordered locus">BSU14750</name>
</gene>